<feature type="chain" id="PRO_0000113326" description="Malate dehydrogenase">
    <location>
        <begin position="1"/>
        <end position="311"/>
    </location>
</feature>
<feature type="active site" description="Proton acceptor" evidence="1">
    <location>
        <position position="177"/>
    </location>
</feature>
<feature type="binding site" evidence="1">
    <location>
        <begin position="7"/>
        <end position="13"/>
    </location>
    <ligand>
        <name>NAD(+)</name>
        <dbReference type="ChEBI" id="CHEBI:57540"/>
    </ligand>
</feature>
<feature type="binding site" evidence="1">
    <location>
        <position position="34"/>
    </location>
    <ligand>
        <name>NAD(+)</name>
        <dbReference type="ChEBI" id="CHEBI:57540"/>
    </ligand>
</feature>
<feature type="binding site" evidence="1">
    <location>
        <position position="81"/>
    </location>
    <ligand>
        <name>substrate</name>
    </ligand>
</feature>
<feature type="binding site" evidence="1">
    <location>
        <position position="87"/>
    </location>
    <ligand>
        <name>substrate</name>
    </ligand>
</feature>
<feature type="binding site" evidence="1">
    <location>
        <position position="94"/>
    </location>
    <ligand>
        <name>NAD(+)</name>
        <dbReference type="ChEBI" id="CHEBI:57540"/>
    </ligand>
</feature>
<feature type="binding site" evidence="1">
    <location>
        <begin position="117"/>
        <end position="119"/>
    </location>
    <ligand>
        <name>NAD(+)</name>
        <dbReference type="ChEBI" id="CHEBI:57540"/>
    </ligand>
</feature>
<feature type="binding site" evidence="1">
    <location>
        <position position="119"/>
    </location>
    <ligand>
        <name>substrate</name>
    </ligand>
</feature>
<feature type="binding site" evidence="1">
    <location>
        <position position="153"/>
    </location>
    <ligand>
        <name>substrate</name>
    </ligand>
</feature>
<feature type="binding site" evidence="1">
    <location>
        <position position="227"/>
    </location>
    <ligand>
        <name>NAD(+)</name>
        <dbReference type="ChEBI" id="CHEBI:57540"/>
    </ligand>
</feature>
<feature type="sequence conflict" description="In Ref. 2; AA sequence." evidence="2" ref="2">
    <location>
        <position position="13"/>
    </location>
</feature>
<feature type="sequence conflict" description="In Ref. 2; AA sequence." evidence="2" ref="2">
    <original>L</original>
    <variation>LG</variation>
    <location>
        <position position="16"/>
    </location>
</feature>
<evidence type="ECO:0000250" key="1"/>
<evidence type="ECO:0000305" key="2"/>
<dbReference type="EC" id="1.1.1.37"/>
<dbReference type="EMBL" id="AE014299">
    <property type="protein sequence ID" value="AAN53846.1"/>
    <property type="molecule type" value="Genomic_DNA"/>
</dbReference>
<dbReference type="RefSeq" id="NP_716401.1">
    <property type="nucleotide sequence ID" value="NC_004347.2"/>
</dbReference>
<dbReference type="RefSeq" id="WP_011071073.1">
    <property type="nucleotide sequence ID" value="NC_004347.2"/>
</dbReference>
<dbReference type="SMR" id="P82177"/>
<dbReference type="STRING" id="211586.SO_0770"/>
<dbReference type="PaxDb" id="211586-SO_0770"/>
<dbReference type="KEGG" id="son:SO_0770"/>
<dbReference type="PATRIC" id="fig|211586.12.peg.740"/>
<dbReference type="eggNOG" id="COG0039">
    <property type="taxonomic scope" value="Bacteria"/>
</dbReference>
<dbReference type="HOGENOM" id="CLU_047181_1_0_6"/>
<dbReference type="OrthoDB" id="9802969at2"/>
<dbReference type="PhylomeDB" id="P82177"/>
<dbReference type="BioCyc" id="SONE211586:G1GMP-721-MONOMER"/>
<dbReference type="Proteomes" id="UP000008186">
    <property type="component" value="Chromosome"/>
</dbReference>
<dbReference type="GO" id="GO:0005737">
    <property type="term" value="C:cytoplasm"/>
    <property type="evidence" value="ECO:0000318"/>
    <property type="project" value="GO_Central"/>
</dbReference>
<dbReference type="GO" id="GO:0030060">
    <property type="term" value="F:L-malate dehydrogenase (NAD+) activity"/>
    <property type="evidence" value="ECO:0000318"/>
    <property type="project" value="GO_Central"/>
</dbReference>
<dbReference type="GO" id="GO:0006108">
    <property type="term" value="P:malate metabolic process"/>
    <property type="evidence" value="ECO:0007669"/>
    <property type="project" value="InterPro"/>
</dbReference>
<dbReference type="GO" id="GO:0006099">
    <property type="term" value="P:tricarboxylic acid cycle"/>
    <property type="evidence" value="ECO:0007669"/>
    <property type="project" value="UniProtKB-UniRule"/>
</dbReference>
<dbReference type="CDD" id="cd01337">
    <property type="entry name" value="MDH_glyoxysomal_mitochondrial"/>
    <property type="match status" value="1"/>
</dbReference>
<dbReference type="FunFam" id="3.40.50.720:FF:000017">
    <property type="entry name" value="Malate dehydrogenase"/>
    <property type="match status" value="1"/>
</dbReference>
<dbReference type="FunFam" id="3.90.110.10:FF:000001">
    <property type="entry name" value="Malate dehydrogenase"/>
    <property type="match status" value="1"/>
</dbReference>
<dbReference type="Gene3D" id="3.90.110.10">
    <property type="entry name" value="Lactate dehydrogenase/glycoside hydrolase, family 4, C-terminal"/>
    <property type="match status" value="1"/>
</dbReference>
<dbReference type="Gene3D" id="3.40.50.720">
    <property type="entry name" value="NAD(P)-binding Rossmann-like Domain"/>
    <property type="match status" value="1"/>
</dbReference>
<dbReference type="HAMAP" id="MF_01516">
    <property type="entry name" value="Malate_dehydrog_1"/>
    <property type="match status" value="1"/>
</dbReference>
<dbReference type="InterPro" id="IPR001557">
    <property type="entry name" value="L-lactate/malate_DH"/>
</dbReference>
<dbReference type="InterPro" id="IPR022383">
    <property type="entry name" value="Lactate/malate_DH_C"/>
</dbReference>
<dbReference type="InterPro" id="IPR001236">
    <property type="entry name" value="Lactate/malate_DH_N"/>
</dbReference>
<dbReference type="InterPro" id="IPR015955">
    <property type="entry name" value="Lactate_DH/Glyco_Ohase_4_C"/>
</dbReference>
<dbReference type="InterPro" id="IPR001252">
    <property type="entry name" value="Malate_DH_AS"/>
</dbReference>
<dbReference type="InterPro" id="IPR010097">
    <property type="entry name" value="Malate_DH_type1"/>
</dbReference>
<dbReference type="InterPro" id="IPR023958">
    <property type="entry name" value="Malate_DH_type1_bac"/>
</dbReference>
<dbReference type="InterPro" id="IPR036291">
    <property type="entry name" value="NAD(P)-bd_dom_sf"/>
</dbReference>
<dbReference type="NCBIfam" id="TIGR01772">
    <property type="entry name" value="MDH_euk_gproteo"/>
    <property type="match status" value="1"/>
</dbReference>
<dbReference type="PANTHER" id="PTHR11540">
    <property type="entry name" value="MALATE AND LACTATE DEHYDROGENASE"/>
    <property type="match status" value="1"/>
</dbReference>
<dbReference type="PANTHER" id="PTHR11540:SF16">
    <property type="entry name" value="MALATE DEHYDROGENASE, MITOCHONDRIAL"/>
    <property type="match status" value="1"/>
</dbReference>
<dbReference type="Pfam" id="PF02866">
    <property type="entry name" value="Ldh_1_C"/>
    <property type="match status" value="1"/>
</dbReference>
<dbReference type="Pfam" id="PF00056">
    <property type="entry name" value="Ldh_1_N"/>
    <property type="match status" value="1"/>
</dbReference>
<dbReference type="PIRSF" id="PIRSF000102">
    <property type="entry name" value="Lac_mal_DH"/>
    <property type="match status" value="1"/>
</dbReference>
<dbReference type="SUPFAM" id="SSF56327">
    <property type="entry name" value="LDH C-terminal domain-like"/>
    <property type="match status" value="1"/>
</dbReference>
<dbReference type="SUPFAM" id="SSF51735">
    <property type="entry name" value="NAD(P)-binding Rossmann-fold domains"/>
    <property type="match status" value="1"/>
</dbReference>
<dbReference type="PROSITE" id="PS00068">
    <property type="entry name" value="MDH"/>
    <property type="match status" value="1"/>
</dbReference>
<name>MDH_SHEON</name>
<sequence>MKVAVLGAAGGIGQALALLLKTQLPAGSKLSLYDIAPVTPGVAVDLSHIPTAVEIKGFAGEDPTPALVGADVVLISAGVARKPGMDRSDLFNINAGIVRNLIEKVAVTCPKALVGIITNPVNTTVAIAAEVMKKAGVYDKNRLFGVTTLDVIRSETFIAELKGLNVADVKINVIGGHSGVTILPLLSQVEGVTFSDEEVASLTKRIQNAGTEVVEAKAGGGSATLSMGQAACRFGMSLVRGLQGEANVVECAYVDGGSEHAEFFAQPVLLGKNGIEKVLPYGEVSAFEANARDSMLDTLKGDIKLGVDFVK</sequence>
<comment type="function">
    <text evidence="1">Catalyzes the reversible oxidation of malate to oxaloacetate.</text>
</comment>
<comment type="catalytic activity">
    <reaction>
        <text>(S)-malate + NAD(+) = oxaloacetate + NADH + H(+)</text>
        <dbReference type="Rhea" id="RHEA:21432"/>
        <dbReference type="ChEBI" id="CHEBI:15378"/>
        <dbReference type="ChEBI" id="CHEBI:15589"/>
        <dbReference type="ChEBI" id="CHEBI:16452"/>
        <dbReference type="ChEBI" id="CHEBI:57540"/>
        <dbReference type="ChEBI" id="CHEBI:57945"/>
        <dbReference type="EC" id="1.1.1.37"/>
    </reaction>
</comment>
<comment type="subunit">
    <text evidence="1">Homodimer.</text>
</comment>
<comment type="similarity">
    <text evidence="2">Belongs to the LDH/MDH superfamily. MDH type 1 family.</text>
</comment>
<organism>
    <name type="scientific">Shewanella oneidensis (strain ATCC 700550 / JCM 31522 / CIP 106686 / LMG 19005 / NCIMB 14063 / MR-1)</name>
    <dbReference type="NCBI Taxonomy" id="211586"/>
    <lineage>
        <taxon>Bacteria</taxon>
        <taxon>Pseudomonadati</taxon>
        <taxon>Pseudomonadota</taxon>
        <taxon>Gammaproteobacteria</taxon>
        <taxon>Alteromonadales</taxon>
        <taxon>Shewanellaceae</taxon>
        <taxon>Shewanella</taxon>
    </lineage>
</organism>
<protein>
    <recommendedName>
        <fullName>Malate dehydrogenase</fullName>
        <ecNumber>1.1.1.37</ecNumber>
    </recommendedName>
</protein>
<gene>
    <name type="primary">mdh</name>
    <name type="ordered locus">SO_0770</name>
</gene>
<keyword id="KW-0903">Direct protein sequencing</keyword>
<keyword id="KW-0520">NAD</keyword>
<keyword id="KW-0560">Oxidoreductase</keyword>
<keyword id="KW-1185">Reference proteome</keyword>
<keyword id="KW-0816">Tricarboxylic acid cycle</keyword>
<accession>P82177</accession>
<proteinExistence type="evidence at protein level"/>
<reference key="1">
    <citation type="journal article" date="2002" name="Nat. Biotechnol.">
        <title>Genome sequence of the dissimilatory metal ion-reducing bacterium Shewanella oneidensis.</title>
        <authorList>
            <person name="Heidelberg J.F."/>
            <person name="Paulsen I.T."/>
            <person name="Nelson K.E."/>
            <person name="Gaidos E.J."/>
            <person name="Nelson W.C."/>
            <person name="Read T.D."/>
            <person name="Eisen J.A."/>
            <person name="Seshadri R."/>
            <person name="Ward N.L."/>
            <person name="Methe B.A."/>
            <person name="Clayton R.A."/>
            <person name="Meyer T."/>
            <person name="Tsapin A."/>
            <person name="Scott J."/>
            <person name="Beanan M.J."/>
            <person name="Brinkac L.M."/>
            <person name="Daugherty S.C."/>
            <person name="DeBoy R.T."/>
            <person name="Dodson R.J."/>
            <person name="Durkin A.S."/>
            <person name="Haft D.H."/>
            <person name="Kolonay J.F."/>
            <person name="Madupu R."/>
            <person name="Peterson J.D."/>
            <person name="Umayam L.A."/>
            <person name="White O."/>
            <person name="Wolf A.M."/>
            <person name="Vamathevan J.J."/>
            <person name="Weidman J.F."/>
            <person name="Impraim M."/>
            <person name="Lee K."/>
            <person name="Berry K.J."/>
            <person name="Lee C."/>
            <person name="Mueller J."/>
            <person name="Khouri H.M."/>
            <person name="Gill J."/>
            <person name="Utterback T.R."/>
            <person name="McDonald L.A."/>
            <person name="Feldblyum T.V."/>
            <person name="Smith H.O."/>
            <person name="Venter J.C."/>
            <person name="Nealson K.H."/>
            <person name="Fraser C.M."/>
        </authorList>
    </citation>
    <scope>NUCLEOTIDE SEQUENCE [LARGE SCALE GENOMIC DNA]</scope>
    <source>
        <strain>ATCC 700550 / JCM 31522 / CIP 106686 / LMG 19005 / NCIMB 14063 / MR-1</strain>
    </source>
</reference>
<reference key="2">
    <citation type="journal article" date="2001" name="Rapid Commun. Mass Spectrom.">
        <title>Automated nanoflow liquid chromatography/tandem mass spectrometric identification of proteins from Shewanella putrefaciens separated by two-dimensional polyacrylamide gel electrophoresis.</title>
        <authorList>
            <person name="Devreese B."/>
            <person name="Vanrobaeys F."/>
            <person name="Van Beeumen J."/>
        </authorList>
    </citation>
    <scope>PROTEIN SEQUENCE OF 3-21</scope>
    <source>
        <strain>ATCC 700550 / JCM 31522 / CIP 106686 / LMG 19005 / NCIMB 14063 / MR-1</strain>
    </source>
</reference>